<proteinExistence type="evidence at protein level"/>
<keyword id="KW-0002">3D-structure</keyword>
<keyword id="KW-0903">Direct protein sequencing</keyword>
<keyword id="KW-1185">Reference proteome</keyword>
<keyword id="KW-0686">Riboflavin biosynthesis</keyword>
<keyword id="KW-0808">Transferase</keyword>
<dbReference type="EC" id="2.5.1.78"/>
<dbReference type="EMBL" id="L09228">
    <property type="protein sequence ID" value="AAA67484.1"/>
    <property type="molecule type" value="Genomic_DNA"/>
</dbReference>
<dbReference type="EMBL" id="X51510">
    <property type="protein sequence ID" value="CAA35881.1"/>
    <property type="molecule type" value="Genomic_DNA"/>
</dbReference>
<dbReference type="EMBL" id="AF516949">
    <property type="protein sequence ID" value="AAN01132.1"/>
    <property type="molecule type" value="Genomic_DNA"/>
</dbReference>
<dbReference type="EMBL" id="AL009126">
    <property type="protein sequence ID" value="CAB14257.1"/>
    <property type="molecule type" value="Genomic_DNA"/>
</dbReference>
<dbReference type="PIR" id="S45546">
    <property type="entry name" value="A26708"/>
</dbReference>
<dbReference type="RefSeq" id="NP_390206.1">
    <property type="nucleotide sequence ID" value="NC_000964.3"/>
</dbReference>
<dbReference type="RefSeq" id="WP_003223915.1">
    <property type="nucleotide sequence ID" value="NZ_OZ025638.1"/>
</dbReference>
<dbReference type="PDB" id="1RVV">
    <property type="method" value="X-ray"/>
    <property type="resolution" value="2.40 A"/>
    <property type="chains" value="1/2/3/4/A/B/C/D/E/F/G/H/I/J/K/L/M/N/O/P/Q/R/S/T/U/V/W/X/Y/Z=1-154"/>
</dbReference>
<dbReference type="PDB" id="1ZIS">
    <property type="method" value="X-ray"/>
    <property type="resolution" value="2.90 A"/>
    <property type="chains" value="A/B/C/D/E/F/G/H/I/J=1-154"/>
</dbReference>
<dbReference type="PDBsum" id="1RVV"/>
<dbReference type="PDBsum" id="1ZIS"/>
<dbReference type="SMR" id="P11998"/>
<dbReference type="FunCoup" id="P11998">
    <property type="interactions" value="668"/>
</dbReference>
<dbReference type="STRING" id="224308.BSU23250"/>
<dbReference type="DrugBank" id="DB04162">
    <property type="generic name" value="5-Nitro-6-ribityl-amino-2,4(1H,3H)-pyrimidinedione"/>
</dbReference>
<dbReference type="jPOST" id="P11998"/>
<dbReference type="PaxDb" id="224308-BSU23250"/>
<dbReference type="EnsemblBacteria" id="CAB14257">
    <property type="protein sequence ID" value="CAB14257"/>
    <property type="gene ID" value="BSU_23250"/>
</dbReference>
<dbReference type="GeneID" id="86873135"/>
<dbReference type="GeneID" id="938949"/>
<dbReference type="KEGG" id="bsu:BSU23250"/>
<dbReference type="PATRIC" id="fig|224308.179.peg.2532"/>
<dbReference type="eggNOG" id="COG0054">
    <property type="taxonomic scope" value="Bacteria"/>
</dbReference>
<dbReference type="InParanoid" id="P11998"/>
<dbReference type="OrthoDB" id="9809709at2"/>
<dbReference type="PhylomeDB" id="P11998"/>
<dbReference type="BioCyc" id="BSUB:BSU23250-MONOMER"/>
<dbReference type="BioCyc" id="MetaCyc:MONOMER-14609"/>
<dbReference type="BRENDA" id="2.5.1.78">
    <property type="organism ID" value="658"/>
</dbReference>
<dbReference type="SABIO-RK" id="P11998"/>
<dbReference type="UniPathway" id="UPA00275">
    <property type="reaction ID" value="UER00404"/>
</dbReference>
<dbReference type="EvolutionaryTrace" id="P11998"/>
<dbReference type="PRO" id="PR:P11998"/>
<dbReference type="Proteomes" id="UP000001570">
    <property type="component" value="Chromosome"/>
</dbReference>
<dbReference type="GO" id="GO:0005737">
    <property type="term" value="C:cytoplasm"/>
    <property type="evidence" value="ECO:0000318"/>
    <property type="project" value="GO_Central"/>
</dbReference>
<dbReference type="GO" id="GO:0005829">
    <property type="term" value="C:cytosol"/>
    <property type="evidence" value="ECO:0000318"/>
    <property type="project" value="GO_Central"/>
</dbReference>
<dbReference type="GO" id="GO:0009349">
    <property type="term" value="C:riboflavin synthase complex"/>
    <property type="evidence" value="ECO:0007669"/>
    <property type="project" value="InterPro"/>
</dbReference>
<dbReference type="GO" id="GO:0000906">
    <property type="term" value="F:6,7-dimethyl-8-ribityllumazine synthase activity"/>
    <property type="evidence" value="ECO:0000318"/>
    <property type="project" value="GO_Central"/>
</dbReference>
<dbReference type="GO" id="GO:0009231">
    <property type="term" value="P:riboflavin biosynthetic process"/>
    <property type="evidence" value="ECO:0000318"/>
    <property type="project" value="GO_Central"/>
</dbReference>
<dbReference type="CDD" id="cd09209">
    <property type="entry name" value="Lumazine_synthase-I"/>
    <property type="match status" value="1"/>
</dbReference>
<dbReference type="FunFam" id="3.40.50.960:FF:000001">
    <property type="entry name" value="6,7-dimethyl-8-ribityllumazine synthase"/>
    <property type="match status" value="1"/>
</dbReference>
<dbReference type="Gene3D" id="3.40.50.960">
    <property type="entry name" value="Lumazine/riboflavin synthase"/>
    <property type="match status" value="1"/>
</dbReference>
<dbReference type="HAMAP" id="MF_00178">
    <property type="entry name" value="Lumazine_synth"/>
    <property type="match status" value="1"/>
</dbReference>
<dbReference type="InterPro" id="IPR034964">
    <property type="entry name" value="LS"/>
</dbReference>
<dbReference type="InterPro" id="IPR002180">
    <property type="entry name" value="LS/RS"/>
</dbReference>
<dbReference type="InterPro" id="IPR036467">
    <property type="entry name" value="LS/RS_sf"/>
</dbReference>
<dbReference type="NCBIfam" id="TIGR00114">
    <property type="entry name" value="lumazine-synth"/>
    <property type="match status" value="1"/>
</dbReference>
<dbReference type="NCBIfam" id="NF000812">
    <property type="entry name" value="PRK00061.1-4"/>
    <property type="match status" value="1"/>
</dbReference>
<dbReference type="PANTHER" id="PTHR21058:SF0">
    <property type="entry name" value="6,7-DIMETHYL-8-RIBITYLLUMAZINE SYNTHASE"/>
    <property type="match status" value="1"/>
</dbReference>
<dbReference type="PANTHER" id="PTHR21058">
    <property type="entry name" value="6,7-DIMETHYL-8-RIBITYLLUMAZINE SYNTHASE DMRL SYNTHASE LUMAZINE SYNTHASE"/>
    <property type="match status" value="1"/>
</dbReference>
<dbReference type="Pfam" id="PF00885">
    <property type="entry name" value="DMRL_synthase"/>
    <property type="match status" value="1"/>
</dbReference>
<dbReference type="SUPFAM" id="SSF52121">
    <property type="entry name" value="Lumazine synthase"/>
    <property type="match status" value="1"/>
</dbReference>
<feature type="chain" id="PRO_0000134715" description="6,7-dimethyl-8-ribityllumazine synthase">
    <location>
        <begin position="1"/>
        <end position="154"/>
    </location>
</feature>
<feature type="active site" description="Proton donor" evidence="1">
    <location>
        <position position="88"/>
    </location>
</feature>
<feature type="binding site">
    <location>
        <begin position="22"/>
        <end position="23"/>
    </location>
    <ligand>
        <name>5-amino-6-(D-ribitylamino)uracil</name>
        <dbReference type="ChEBI" id="CHEBI:15934"/>
    </ligand>
</feature>
<feature type="binding site">
    <location>
        <begin position="56"/>
        <end position="58"/>
    </location>
    <ligand>
        <name>5-amino-6-(D-ribitylamino)uracil</name>
        <dbReference type="ChEBI" id="CHEBI:15934"/>
    </ligand>
</feature>
<feature type="binding site">
    <location>
        <begin position="80"/>
        <end position="82"/>
    </location>
    <ligand>
        <name>5-amino-6-(D-ribitylamino)uracil</name>
        <dbReference type="ChEBI" id="CHEBI:15934"/>
    </ligand>
</feature>
<feature type="binding site" evidence="8">
    <location>
        <begin position="85"/>
        <end position="86"/>
    </location>
    <ligand>
        <name>(2S)-2-hydroxy-3-oxobutyl phosphate</name>
        <dbReference type="ChEBI" id="CHEBI:58830"/>
    </ligand>
</feature>
<feature type="binding site">
    <location>
        <position position="113"/>
    </location>
    <ligand>
        <name>5-amino-6-(D-ribitylamino)uracil</name>
        <dbReference type="ChEBI" id="CHEBI:15934"/>
    </ligand>
</feature>
<feature type="binding site" evidence="8">
    <location>
        <position position="127"/>
    </location>
    <ligand>
        <name>(2S)-2-hydroxy-3-oxobutyl phosphate</name>
        <dbReference type="ChEBI" id="CHEBI:58830"/>
    </ligand>
</feature>
<feature type="mutagenesis site" description="10% of wild-type activity. 17-fold decrease in the affinity for the pyrimidine substrate, but no effect on that for 1-deoxy-L-glycero-tetrulose 4-phosphate." evidence="2">
    <original>H</original>
    <variation>A</variation>
    <location>
        <position position="88"/>
    </location>
</feature>
<feature type="mutagenesis site" description="About 1% of wild-type activity." evidence="2">
    <original>R</original>
    <variation>T</variation>
    <location>
        <position position="127"/>
    </location>
</feature>
<feature type="sequence conflict" description="In Ref. 1; AA sequence." evidence="8" ref="1">
    <original>K</original>
    <variation>G</variation>
    <location>
        <position position="65"/>
    </location>
</feature>
<feature type="strand" evidence="9">
    <location>
        <begin position="2"/>
        <end position="4"/>
    </location>
</feature>
<feature type="strand" evidence="9">
    <location>
        <begin position="15"/>
        <end position="21"/>
    </location>
</feature>
<feature type="helix" evidence="9">
    <location>
        <begin position="24"/>
        <end position="40"/>
    </location>
</feature>
<feature type="helix" evidence="9">
    <location>
        <begin position="45"/>
        <end position="47"/>
    </location>
</feature>
<feature type="strand" evidence="9">
    <location>
        <begin position="48"/>
        <end position="55"/>
    </location>
</feature>
<feature type="helix" evidence="9">
    <location>
        <begin position="56"/>
        <end position="58"/>
    </location>
</feature>
<feature type="helix" evidence="9">
    <location>
        <begin position="59"/>
        <end position="68"/>
    </location>
</feature>
<feature type="strand" evidence="9">
    <location>
        <begin position="73"/>
        <end position="82"/>
    </location>
</feature>
<feature type="strand" evidence="9">
    <location>
        <begin position="85"/>
        <end position="87"/>
    </location>
</feature>
<feature type="helix" evidence="9">
    <location>
        <begin position="88"/>
        <end position="107"/>
    </location>
</feature>
<feature type="strand" evidence="9">
    <location>
        <begin position="111"/>
        <end position="120"/>
    </location>
</feature>
<feature type="helix" evidence="9">
    <location>
        <begin position="121"/>
        <end position="126"/>
    </location>
</feature>
<feature type="strand" evidence="9">
    <location>
        <begin position="128"/>
        <end position="130"/>
    </location>
</feature>
<feature type="helix" evidence="9">
    <location>
        <begin position="135"/>
        <end position="152"/>
    </location>
</feature>
<protein>
    <recommendedName>
        <fullName>6,7-dimethyl-8-ribityllumazine synthase</fullName>
        <shortName>DMRL synthase</shortName>
        <shortName>LS</shortName>
        <shortName>Lumazine synthase</shortName>
        <ecNumber>2.5.1.78</ecNumber>
    </recommendedName>
    <alternativeName>
        <fullName>Heavy riboflavin synthase beta subunit</fullName>
        <shortName>HRS beta subunit</shortName>
    </alternativeName>
</protein>
<sequence>MNIIQGNLVGTGLKIGIVVGRFNDFITSKLLSGAEDALLRHGVDTNDIDVAWVPGAFEIPFAAKKMAETKKYDAIITLGTVIRGATTHYDYVCNEAAKGIAQAANTTGVPVIFGIVTTENIEQAIERAGTKAGNKGVDCAVSAIEMANLNRSFE</sequence>
<reference key="1">
    <citation type="journal article" date="1987" name="J. Biol. Chem.">
        <title>Heavy riboflavin synthase of Bacillus subtilis. Primary structure of the beta subunit.</title>
        <authorList>
            <person name="Ludwig H.C."/>
            <person name="Lottspeich F."/>
            <person name="Henschen A."/>
            <person name="Ladenstein R."/>
            <person name="Bacher A."/>
        </authorList>
    </citation>
    <scope>PROTEIN SEQUENCE</scope>
</reference>
<reference key="2">
    <citation type="journal article" date="1993" name="Mol. Microbiol.">
        <title>The organization of the Bacillus subtilis 168 chromosome region between the spoVA and serA genetic loci, based on sequence data.</title>
        <authorList>
            <person name="Sorokin A.V."/>
            <person name="Zumstein E."/>
            <person name="Azevedo V."/>
            <person name="Ehrlich S.D."/>
            <person name="Serror P."/>
        </authorList>
    </citation>
    <scope>NUCLEOTIDE SEQUENCE [GENOMIC DNA]</scope>
    <source>
        <strain>168 / Marburg / ATCC 6051 / DSM 10 / JCM 1465 / NBRC 13719 / NCIMB 3610 / NRRL NRS-744 / VKM B-501</strain>
    </source>
</reference>
<reference key="3">
    <citation type="thesis" date="1989" institute="USSR Academy of Sciences" country="Russia">
        <authorList>
            <person name="Mironov V.N."/>
        </authorList>
    </citation>
    <scope>NUCLEOTIDE SEQUENCE [GENOMIC DNA]</scope>
    <source>
        <strain>168 / SHGW</strain>
    </source>
</reference>
<reference key="4">
    <citation type="journal article" date="2003" name="J. Mol. Biol.">
        <title>Enzyme catalysis via control of activation entropy: site-directed mutagenesis of 6,7-dimethyl-8-ribityllumazine synthase.</title>
        <authorList>
            <person name="Fischer M."/>
            <person name="Haase I."/>
            <person name="Kis K."/>
            <person name="Meining W."/>
            <person name="Ladenstein R."/>
            <person name="Cushman M."/>
            <person name="Schramek N."/>
            <person name="Huber R."/>
            <person name="Bacher A."/>
        </authorList>
    </citation>
    <scope>NUCLEOTIDE SEQUENCE [GENOMIC DNA]</scope>
    <scope>FUNCTION</scope>
    <scope>CATALYTIC ACTIVITY</scope>
    <scope>KINETIC PARAMETERS</scope>
    <scope>MUTAGENESIS OF HIS-88 AND ARG-127</scope>
    <scope>MUTAGENESIS OF OTHER RESIDUES</scope>
</reference>
<reference key="5">
    <citation type="journal article" date="1997" name="Nature">
        <title>The complete genome sequence of the Gram-positive bacterium Bacillus subtilis.</title>
        <authorList>
            <person name="Kunst F."/>
            <person name="Ogasawara N."/>
            <person name="Moszer I."/>
            <person name="Albertini A.M."/>
            <person name="Alloni G."/>
            <person name="Azevedo V."/>
            <person name="Bertero M.G."/>
            <person name="Bessieres P."/>
            <person name="Bolotin A."/>
            <person name="Borchert S."/>
            <person name="Borriss R."/>
            <person name="Boursier L."/>
            <person name="Brans A."/>
            <person name="Braun M."/>
            <person name="Brignell S.C."/>
            <person name="Bron S."/>
            <person name="Brouillet S."/>
            <person name="Bruschi C.V."/>
            <person name="Caldwell B."/>
            <person name="Capuano V."/>
            <person name="Carter N.M."/>
            <person name="Choi S.-K."/>
            <person name="Codani J.-J."/>
            <person name="Connerton I.F."/>
            <person name="Cummings N.J."/>
            <person name="Daniel R.A."/>
            <person name="Denizot F."/>
            <person name="Devine K.M."/>
            <person name="Duesterhoeft A."/>
            <person name="Ehrlich S.D."/>
            <person name="Emmerson P.T."/>
            <person name="Entian K.-D."/>
            <person name="Errington J."/>
            <person name="Fabret C."/>
            <person name="Ferrari E."/>
            <person name="Foulger D."/>
            <person name="Fritz C."/>
            <person name="Fujita M."/>
            <person name="Fujita Y."/>
            <person name="Fuma S."/>
            <person name="Galizzi A."/>
            <person name="Galleron N."/>
            <person name="Ghim S.-Y."/>
            <person name="Glaser P."/>
            <person name="Goffeau A."/>
            <person name="Golightly E.J."/>
            <person name="Grandi G."/>
            <person name="Guiseppi G."/>
            <person name="Guy B.J."/>
            <person name="Haga K."/>
            <person name="Haiech J."/>
            <person name="Harwood C.R."/>
            <person name="Henaut A."/>
            <person name="Hilbert H."/>
            <person name="Holsappel S."/>
            <person name="Hosono S."/>
            <person name="Hullo M.-F."/>
            <person name="Itaya M."/>
            <person name="Jones L.-M."/>
            <person name="Joris B."/>
            <person name="Karamata D."/>
            <person name="Kasahara Y."/>
            <person name="Klaerr-Blanchard M."/>
            <person name="Klein C."/>
            <person name="Kobayashi Y."/>
            <person name="Koetter P."/>
            <person name="Koningstein G."/>
            <person name="Krogh S."/>
            <person name="Kumano M."/>
            <person name="Kurita K."/>
            <person name="Lapidus A."/>
            <person name="Lardinois S."/>
            <person name="Lauber J."/>
            <person name="Lazarevic V."/>
            <person name="Lee S.-M."/>
            <person name="Levine A."/>
            <person name="Liu H."/>
            <person name="Masuda S."/>
            <person name="Mauel C."/>
            <person name="Medigue C."/>
            <person name="Medina N."/>
            <person name="Mellado R.P."/>
            <person name="Mizuno M."/>
            <person name="Moestl D."/>
            <person name="Nakai S."/>
            <person name="Noback M."/>
            <person name="Noone D."/>
            <person name="O'Reilly M."/>
            <person name="Ogawa K."/>
            <person name="Ogiwara A."/>
            <person name="Oudega B."/>
            <person name="Park S.-H."/>
            <person name="Parro V."/>
            <person name="Pohl T.M."/>
            <person name="Portetelle D."/>
            <person name="Porwollik S."/>
            <person name="Prescott A.M."/>
            <person name="Presecan E."/>
            <person name="Pujic P."/>
            <person name="Purnelle B."/>
            <person name="Rapoport G."/>
            <person name="Rey M."/>
            <person name="Reynolds S."/>
            <person name="Rieger M."/>
            <person name="Rivolta C."/>
            <person name="Rocha E."/>
            <person name="Roche B."/>
            <person name="Rose M."/>
            <person name="Sadaie Y."/>
            <person name="Sato T."/>
            <person name="Scanlan E."/>
            <person name="Schleich S."/>
            <person name="Schroeter R."/>
            <person name="Scoffone F."/>
            <person name="Sekiguchi J."/>
            <person name="Sekowska A."/>
            <person name="Seror S.J."/>
            <person name="Serror P."/>
            <person name="Shin B.-S."/>
            <person name="Soldo B."/>
            <person name="Sorokin A."/>
            <person name="Tacconi E."/>
            <person name="Takagi T."/>
            <person name="Takahashi H."/>
            <person name="Takemaru K."/>
            <person name="Takeuchi M."/>
            <person name="Tamakoshi A."/>
            <person name="Tanaka T."/>
            <person name="Terpstra P."/>
            <person name="Tognoni A."/>
            <person name="Tosato V."/>
            <person name="Uchiyama S."/>
            <person name="Vandenbol M."/>
            <person name="Vannier F."/>
            <person name="Vassarotti A."/>
            <person name="Viari A."/>
            <person name="Wambutt R."/>
            <person name="Wedler E."/>
            <person name="Wedler H."/>
            <person name="Weitzenegger T."/>
            <person name="Winters P."/>
            <person name="Wipat A."/>
            <person name="Yamamoto H."/>
            <person name="Yamane K."/>
            <person name="Yasumoto K."/>
            <person name="Yata K."/>
            <person name="Yoshida K."/>
            <person name="Yoshikawa H.-F."/>
            <person name="Zumstein E."/>
            <person name="Yoshikawa H."/>
            <person name="Danchin A."/>
        </authorList>
    </citation>
    <scope>NUCLEOTIDE SEQUENCE [LARGE SCALE GENOMIC DNA]</scope>
    <source>
        <strain>168</strain>
    </source>
</reference>
<reference key="6">
    <citation type="journal article" date="1996" name="J. Bacteriol.">
        <title>Cold shock stress-induced proteins in Bacillus subtilis.</title>
        <authorList>
            <person name="Graumann P."/>
            <person name="Schroeder K."/>
            <person name="Schmid R."/>
            <person name="Marahiel M.A."/>
        </authorList>
    </citation>
    <scope>PROTEIN SEQUENCE OF 1-20</scope>
    <source>
        <strain>168 / JH642</strain>
    </source>
</reference>
<reference key="7">
    <citation type="journal article" date="1986" name="J. Mol. Biol.">
        <title>Heavy riboflavin synthase from Bacillus subtilis. Quaternary structure and reaggregation.</title>
        <authorList>
            <person name="Bacher A."/>
            <person name="Ludwig H.C."/>
            <person name="Schnepple H."/>
            <person name="Ben-Shaul Y."/>
        </authorList>
    </citation>
    <scope>SUBUNIT</scope>
</reference>
<reference key="8">
    <citation type="journal article" date="1995" name="Biochemistry">
        <title>Biosynthesis of riboflavin. Studies on the reaction mechanism of 6,7-dimethyl-8-ribityllumazine synthase.</title>
        <authorList>
            <person name="Kis K."/>
            <person name="Volk R."/>
            <person name="Bacher A."/>
        </authorList>
    </citation>
    <scope>FUNCTION</scope>
    <scope>CATALYTIC ACTIVITY</scope>
    <scope>SUBSTRATE SPECIFICITY</scope>
    <scope>BIOPHYSICOCHEMICAL PROPERTIES</scope>
    <scope>STEREOSPECIFICITY</scope>
    <scope>REACTION MECHANISM</scope>
    <scope>PATHWAY</scope>
</reference>
<reference key="9">
    <citation type="journal article" date="1988" name="J. Mol. Biol.">
        <title>Heavy riboflavin synthase from Bacillus subtilis. Crystal structure analysis of the icosahedral beta 60 capsid at 3.3-A resolution.</title>
        <authorList>
            <person name="Ladenstein R."/>
            <person name="Schneider M."/>
            <person name="Huber R."/>
            <person name="Bartunik H.-D."/>
            <person name="Wilson K."/>
            <person name="Schott K."/>
            <person name="Bacher A."/>
        </authorList>
    </citation>
    <scope>X-RAY CRYSTALLOGRAPHY (3.3 ANGSTROMS)</scope>
    <scope>SUBUNIT</scope>
</reference>
<reference key="10">
    <citation type="journal article" date="1995" name="J. Mol. Biol.">
        <title>Studies on the lumazine synthase/riboflavin synthase complex of Bacillus subtilis: crystal structure analysis of reconstituted, icosahedral beta-subunit capsids with bound substrate analogue inhibitor at 2.4-A resolution.</title>
        <authorList>
            <person name="Ritseert K."/>
            <person name="Huber R."/>
            <person name="Turk D."/>
            <person name="Ladenstein R."/>
            <person name="Schmidt-Baese K."/>
            <person name="Bacher A."/>
        </authorList>
    </citation>
    <scope>X-RAY CRYSTALLOGRAPHY (2.4 ANGSTROMS) IN COMPLEX WITH SUBSTRATE ANALOG INHIBITOR AND PHOSPHATE</scope>
    <scope>SUBUNIT</scope>
    <scope>ACTIVE SITE</scope>
    <scope>REACTION MECHANISM</scope>
</reference>
<reference key="11">
    <citation type="submission" date="2009-02" db="PDB data bank">
        <title>Crystal structure of recombinant lumazine synthase (hexagonal form).</title>
        <authorList>
            <person name="Lopez-Jaramillo F.J."/>
        </authorList>
    </citation>
    <scope>X-RAY CRYSTALLOGRAPHY (2.90 ANGSTROMS) IN COMPLEX WITH SUBSTRATE ANALOG INHIBITOR AND PHOSPHATE</scope>
</reference>
<evidence type="ECO:0000255" key="1"/>
<evidence type="ECO:0000269" key="2">
    <source>
    </source>
</evidence>
<evidence type="ECO:0000269" key="3">
    <source>
    </source>
</evidence>
<evidence type="ECO:0000269" key="4">
    <source>
    </source>
</evidence>
<evidence type="ECO:0000269" key="5">
    <source>
    </source>
</evidence>
<evidence type="ECO:0000269" key="6">
    <source>
    </source>
</evidence>
<evidence type="ECO:0000269" key="7">
    <source ref="11"/>
</evidence>
<evidence type="ECO:0000305" key="8"/>
<evidence type="ECO:0007829" key="9">
    <source>
        <dbReference type="PDB" id="1RVV"/>
    </source>
</evidence>
<name>RISB_BACSU</name>
<comment type="function">
    <text evidence="2 6">Catalyzes the formation of 6,7-dimethyl-8-ribityllumazine by condensation of 5-amino-6-(D-ribitylamino)uracil with 3,4-dihydroxy-2-butanone 4-phosphate. This is the penultimate step in the biosynthesis of riboflavin. Is able to use the non-natural R enantiomer of 3,4-dihydroxy-2-butanone 4-phosphate as a substrate, but with less efficiency than the natural S enantiomer. Cannot use unphosphorylated 3,4-dihydroxy-2-butanone, 3,4-dihydroxy-2-butanone 3-phosphate or diacetyl as substrates.</text>
</comment>
<comment type="catalytic activity">
    <reaction evidence="2 6">
        <text>(2S)-2-hydroxy-3-oxobutyl phosphate + 5-amino-6-(D-ribitylamino)uracil = 6,7-dimethyl-8-(1-D-ribityl)lumazine + phosphate + 2 H2O + H(+)</text>
        <dbReference type="Rhea" id="RHEA:26152"/>
        <dbReference type="ChEBI" id="CHEBI:15377"/>
        <dbReference type="ChEBI" id="CHEBI:15378"/>
        <dbReference type="ChEBI" id="CHEBI:15934"/>
        <dbReference type="ChEBI" id="CHEBI:43474"/>
        <dbReference type="ChEBI" id="CHEBI:58201"/>
        <dbReference type="ChEBI" id="CHEBI:58830"/>
        <dbReference type="EC" id="2.5.1.78"/>
    </reaction>
</comment>
<comment type="biophysicochemical properties">
    <kinetics>
        <KM evidence="2 6">5 uM for 5-amino-6-(D-ribitylamino)uracil</KM>
        <KM evidence="2 6">9 uM for 5-amino-6-(D-ribitylamino)uracil</KM>
        <KM evidence="2 6">130 uM for (3S)-3,4-dihydroxy-2-butanone 4-phosphate</KM>
        <KM evidence="2 6">55 uM for (3S)-3,4-dihydroxy-2-butanone 4-phosphate</KM>
        <Vmax evidence="2 6">12000.0 nmol/h/mg enzyme</Vmax>
        <text evidence="2">kcat is 0.056 sec(-1).</text>
    </kinetics>
    <phDependence>
        <text evidence="6">Optimum pH is 6.5-8.0.</text>
    </phDependence>
</comment>
<comment type="pathway">
    <text evidence="6">Cofactor biosynthesis; riboflavin biosynthesis; riboflavin from 2-hydroxy-3-oxobutyl phosphate and 5-amino-6-(D-ribitylamino)uracil: step 1/2.</text>
</comment>
<comment type="subunit">
    <text evidence="3 4 5 7">Forms an icosahedral capsid composed of 60 subunits, arranged as a dodecamer of pentamers. Can interact with riboflavin synthase, forming a lumazine synthase/riboflavin synthase complex, also designated as 'heavy riboflavin synthase complex', which consists of a trimer of riboflavin synthase enclosed within the icosahedral structure composed of 60 subunits of 6,7-dimethyl-8-ribityllumazine synthase.</text>
</comment>
<comment type="similarity">
    <text evidence="8">Belongs to the DMRL synthase family.</text>
</comment>
<accession>P11998</accession>
<accession>P17621</accession>
<organism>
    <name type="scientific">Bacillus subtilis (strain 168)</name>
    <dbReference type="NCBI Taxonomy" id="224308"/>
    <lineage>
        <taxon>Bacteria</taxon>
        <taxon>Bacillati</taxon>
        <taxon>Bacillota</taxon>
        <taxon>Bacilli</taxon>
        <taxon>Bacillales</taxon>
        <taxon>Bacillaceae</taxon>
        <taxon>Bacillus</taxon>
    </lineage>
</organism>
<gene>
    <name type="primary">ribH</name>
    <name type="ordered locus">BSU23250</name>
</gene>